<evidence type="ECO:0000255" key="1"/>
<evidence type="ECO:0000256" key="2">
    <source>
        <dbReference type="SAM" id="MobiDB-lite"/>
    </source>
</evidence>
<evidence type="ECO:0000312" key="3">
    <source>
        <dbReference type="HGNC" id="HGNC:53434"/>
    </source>
</evidence>
<gene>
    <name evidence="3" type="primary">SMIM28</name>
</gene>
<accession>A0A1B0GU29</accession>
<keyword id="KW-0472">Membrane</keyword>
<keyword id="KW-1185">Reference proteome</keyword>
<keyword id="KW-0812">Transmembrane</keyword>
<keyword id="KW-1133">Transmembrane helix</keyword>
<protein>
    <recommendedName>
        <fullName evidence="3">Small integral membrane protein 28</fullName>
    </recommendedName>
</protein>
<sequence>MRGLLGSSWKKFGHAGRGTYEWLTSEPGLPLLETQLQGTQGVSSTQEDVEPFLCILLPATILLFLAFLLLFLYRRCKSPPPQGQVFSIDLPEHPPAGEVTDLLPGLAWSSEDFPYSPLPPEATLPSQCLPPSYEEATRNPPGEEAQGCSPSV</sequence>
<name>SIM28_HUMAN</name>
<reference key="1">
    <citation type="journal article" date="2003" name="Nature">
        <title>The DNA sequence and analysis of human chromosome 6.</title>
        <authorList>
            <person name="Mungall A.J."/>
            <person name="Palmer S.A."/>
            <person name="Sims S.K."/>
            <person name="Edwards C.A."/>
            <person name="Ashurst J.L."/>
            <person name="Wilming L."/>
            <person name="Jones M.C."/>
            <person name="Horton R."/>
            <person name="Hunt S.E."/>
            <person name="Scott C.E."/>
            <person name="Gilbert J.G.R."/>
            <person name="Clamp M.E."/>
            <person name="Bethel G."/>
            <person name="Milne S."/>
            <person name="Ainscough R."/>
            <person name="Almeida J.P."/>
            <person name="Ambrose K.D."/>
            <person name="Andrews T.D."/>
            <person name="Ashwell R.I.S."/>
            <person name="Babbage A.K."/>
            <person name="Bagguley C.L."/>
            <person name="Bailey J."/>
            <person name="Banerjee R."/>
            <person name="Barker D.J."/>
            <person name="Barlow K.F."/>
            <person name="Bates K."/>
            <person name="Beare D.M."/>
            <person name="Beasley H."/>
            <person name="Beasley O."/>
            <person name="Bird C.P."/>
            <person name="Blakey S.E."/>
            <person name="Bray-Allen S."/>
            <person name="Brook J."/>
            <person name="Brown A.J."/>
            <person name="Brown J.Y."/>
            <person name="Burford D.C."/>
            <person name="Burrill W."/>
            <person name="Burton J."/>
            <person name="Carder C."/>
            <person name="Carter N.P."/>
            <person name="Chapman J.C."/>
            <person name="Clark S.Y."/>
            <person name="Clark G."/>
            <person name="Clee C.M."/>
            <person name="Clegg S."/>
            <person name="Cobley V."/>
            <person name="Collier R.E."/>
            <person name="Collins J.E."/>
            <person name="Colman L.K."/>
            <person name="Corby N.R."/>
            <person name="Coville G.J."/>
            <person name="Culley K.M."/>
            <person name="Dhami P."/>
            <person name="Davies J."/>
            <person name="Dunn M."/>
            <person name="Earthrowl M.E."/>
            <person name="Ellington A.E."/>
            <person name="Evans K.A."/>
            <person name="Faulkner L."/>
            <person name="Francis M.D."/>
            <person name="Frankish A."/>
            <person name="Frankland J."/>
            <person name="French L."/>
            <person name="Garner P."/>
            <person name="Garnett J."/>
            <person name="Ghori M.J."/>
            <person name="Gilby L.M."/>
            <person name="Gillson C.J."/>
            <person name="Glithero R.J."/>
            <person name="Grafham D.V."/>
            <person name="Grant M."/>
            <person name="Gribble S."/>
            <person name="Griffiths C."/>
            <person name="Griffiths M.N.D."/>
            <person name="Hall R."/>
            <person name="Halls K.S."/>
            <person name="Hammond S."/>
            <person name="Harley J.L."/>
            <person name="Hart E.A."/>
            <person name="Heath P.D."/>
            <person name="Heathcott R."/>
            <person name="Holmes S.J."/>
            <person name="Howden P.J."/>
            <person name="Howe K.L."/>
            <person name="Howell G.R."/>
            <person name="Huckle E."/>
            <person name="Humphray S.J."/>
            <person name="Humphries M.D."/>
            <person name="Hunt A.R."/>
            <person name="Johnson C.M."/>
            <person name="Joy A.A."/>
            <person name="Kay M."/>
            <person name="Keenan S.J."/>
            <person name="Kimberley A.M."/>
            <person name="King A."/>
            <person name="Laird G.K."/>
            <person name="Langford C."/>
            <person name="Lawlor S."/>
            <person name="Leongamornlert D.A."/>
            <person name="Leversha M."/>
            <person name="Lloyd C.R."/>
            <person name="Lloyd D.M."/>
            <person name="Loveland J.E."/>
            <person name="Lovell J."/>
            <person name="Martin S."/>
            <person name="Mashreghi-Mohammadi M."/>
            <person name="Maslen G.L."/>
            <person name="Matthews L."/>
            <person name="McCann O.T."/>
            <person name="McLaren S.J."/>
            <person name="McLay K."/>
            <person name="McMurray A."/>
            <person name="Moore M.J.F."/>
            <person name="Mullikin J.C."/>
            <person name="Niblett D."/>
            <person name="Nickerson T."/>
            <person name="Novik K.L."/>
            <person name="Oliver K."/>
            <person name="Overton-Larty E.K."/>
            <person name="Parker A."/>
            <person name="Patel R."/>
            <person name="Pearce A.V."/>
            <person name="Peck A.I."/>
            <person name="Phillimore B.J.C.T."/>
            <person name="Phillips S."/>
            <person name="Plumb R.W."/>
            <person name="Porter K.M."/>
            <person name="Ramsey Y."/>
            <person name="Ranby S.A."/>
            <person name="Rice C.M."/>
            <person name="Ross M.T."/>
            <person name="Searle S.M."/>
            <person name="Sehra H.K."/>
            <person name="Sheridan E."/>
            <person name="Skuce C.D."/>
            <person name="Smith S."/>
            <person name="Smith M."/>
            <person name="Spraggon L."/>
            <person name="Squares S.L."/>
            <person name="Steward C.A."/>
            <person name="Sycamore N."/>
            <person name="Tamlyn-Hall G."/>
            <person name="Tester J."/>
            <person name="Theaker A.J."/>
            <person name="Thomas D.W."/>
            <person name="Thorpe A."/>
            <person name="Tracey A."/>
            <person name="Tromans A."/>
            <person name="Tubby B."/>
            <person name="Wall M."/>
            <person name="Wallis J.M."/>
            <person name="West A.P."/>
            <person name="White S.S."/>
            <person name="Whitehead S.L."/>
            <person name="Whittaker H."/>
            <person name="Wild A."/>
            <person name="Willey D.J."/>
            <person name="Wilmer T.E."/>
            <person name="Wood J.M."/>
            <person name="Wray P.W."/>
            <person name="Wyatt J.C."/>
            <person name="Young L."/>
            <person name="Younger R.M."/>
            <person name="Bentley D.R."/>
            <person name="Coulson A."/>
            <person name="Durbin R.M."/>
            <person name="Hubbard T."/>
            <person name="Sulston J.E."/>
            <person name="Dunham I."/>
            <person name="Rogers J."/>
            <person name="Beck S."/>
        </authorList>
    </citation>
    <scope>NUCLEOTIDE SEQUENCE [LARGE SCALE GENOMIC DNA]</scope>
</reference>
<dbReference type="EMBL" id="AL031003">
    <property type="status" value="NOT_ANNOTATED_CDS"/>
    <property type="molecule type" value="Genomic_DNA"/>
</dbReference>
<dbReference type="CCDS" id="CCDS94012.1"/>
<dbReference type="RefSeq" id="NP_001355092.1">
    <property type="nucleotide sequence ID" value="NM_001368163.3"/>
</dbReference>
<dbReference type="STRING" id="9606.ENSP00000489939"/>
<dbReference type="BioMuta" id="SMIM28"/>
<dbReference type="Ensembl" id="ENST00000573100.2">
    <property type="protein sequence ID" value="ENSP00000489939.1"/>
    <property type="gene ID" value="ENSG00000262543.2"/>
</dbReference>
<dbReference type="GeneID" id="110806279"/>
<dbReference type="MANE-Select" id="ENST00000573100.2">
    <property type="protein sequence ID" value="ENSP00000489939.1"/>
    <property type="RefSeq nucleotide sequence ID" value="NM_001368163.3"/>
    <property type="RefSeq protein sequence ID" value="NP_001355092.1"/>
</dbReference>
<dbReference type="AGR" id="HGNC:53434"/>
<dbReference type="GeneCards" id="SMIM28"/>
<dbReference type="HGNC" id="HGNC:53434">
    <property type="gene designation" value="SMIM28"/>
</dbReference>
<dbReference type="HPA" id="ENSG00000262543">
    <property type="expression patterns" value="Tissue enriched (intestine)"/>
</dbReference>
<dbReference type="neXtProt" id="NX_A0A1B0GU29"/>
<dbReference type="OpenTargets" id="ENSG00000262543"/>
<dbReference type="VEuPathDB" id="HostDB:ENSG00000262543"/>
<dbReference type="GeneTree" id="ENSGT00740000116829"/>
<dbReference type="InParanoid" id="A0A1B0GU29"/>
<dbReference type="OMA" id="RGTYEWL"/>
<dbReference type="OrthoDB" id="8734319at2759"/>
<dbReference type="PAN-GO" id="A0A1B0GU29">
    <property type="GO annotations" value="0 GO annotations based on evolutionary models"/>
</dbReference>
<dbReference type="Pharos" id="A0A1B0GU29">
    <property type="development level" value="Tdark"/>
</dbReference>
<dbReference type="PRO" id="PR:A0A1B0GU29"/>
<dbReference type="Proteomes" id="UP000005640">
    <property type="component" value="Chromosome 6"/>
</dbReference>
<dbReference type="RNAct" id="A0A1B0GU29">
    <property type="molecule type" value="protein"/>
</dbReference>
<dbReference type="Bgee" id="ENSG00000262543">
    <property type="expression patterns" value="Expressed in muscle layer of sigmoid colon and 16 other cell types or tissues"/>
</dbReference>
<dbReference type="GO" id="GO:0016020">
    <property type="term" value="C:membrane"/>
    <property type="evidence" value="ECO:0007669"/>
    <property type="project" value="UniProtKB-SubCell"/>
</dbReference>
<organism>
    <name type="scientific">Homo sapiens</name>
    <name type="common">Human</name>
    <dbReference type="NCBI Taxonomy" id="9606"/>
    <lineage>
        <taxon>Eukaryota</taxon>
        <taxon>Metazoa</taxon>
        <taxon>Chordata</taxon>
        <taxon>Craniata</taxon>
        <taxon>Vertebrata</taxon>
        <taxon>Euteleostomi</taxon>
        <taxon>Mammalia</taxon>
        <taxon>Eutheria</taxon>
        <taxon>Euarchontoglires</taxon>
        <taxon>Primates</taxon>
        <taxon>Haplorrhini</taxon>
        <taxon>Catarrhini</taxon>
        <taxon>Hominidae</taxon>
        <taxon>Homo</taxon>
    </lineage>
</organism>
<proteinExistence type="inferred from homology"/>
<feature type="chain" id="PRO_0000441415" description="Small integral membrane protein 28">
    <location>
        <begin position="1"/>
        <end position="152"/>
    </location>
</feature>
<feature type="transmembrane region" description="Helical" evidence="1">
    <location>
        <begin position="52"/>
        <end position="72"/>
    </location>
</feature>
<feature type="region of interest" description="Disordered" evidence="2">
    <location>
        <begin position="117"/>
        <end position="152"/>
    </location>
</feature>
<comment type="subcellular location">
    <subcellularLocation>
        <location evidence="1">Membrane</location>
        <topology evidence="1">Single-pass membrane protein</topology>
    </subcellularLocation>
</comment>